<sequence>MEFNWSEIALNTAKELEEKIMPLFGTKKAGENVGTNVSGDVTKYVDKVAEDIILKRLVPLGVNVVSEEVGTVDSGSDYTVVVDPLDGSYNFSAGIPIFAFSLGIFKGKKPVYGAIYEFLPENFYEAKPGKGAYLNGERIRVNEPEPGKEALSFYTRGRCLGLVKKVKRVRVLGAIAVELAYVARGSLDGVFDIRNYVRPTDVAAGVLLVREAGGIVTDERGREFEVKLSATEKTNIIAVANERLLNTILEAMKDEP</sequence>
<reference key="1">
    <citation type="journal article" date="2005" name="Genome Res.">
        <title>Complete genome sequence of the hyperthermophilic archaeon Thermococcus kodakaraensis KOD1 and comparison with Pyrococcus genomes.</title>
        <authorList>
            <person name="Fukui T."/>
            <person name="Atomi H."/>
            <person name="Kanai T."/>
            <person name="Matsumi R."/>
            <person name="Fujiwara S."/>
            <person name="Imanaka T."/>
        </authorList>
    </citation>
    <scope>NUCLEOTIDE SEQUENCE [LARGE SCALE GENOMIC DNA]</scope>
    <source>
        <strain>ATCC BAA-918 / JCM 12380 / KOD1</strain>
    </source>
</reference>
<reference key="2">
    <citation type="journal article" date="2004" name="J. Bacteriol.">
        <title>Genetic evidence identifying the true gluconeogenic fructose-1,6-bisphosphatase in Thermococcus kodakaraensis and other hyperthermophiles.</title>
        <authorList>
            <person name="Sato T."/>
            <person name="Imanaka H."/>
            <person name="Rashid N."/>
            <person name="Fukui T."/>
            <person name="Atomi H."/>
            <person name="Imanaka T."/>
        </authorList>
    </citation>
    <scope>FUNCTION</scope>
    <scope>CATALYTIC ACTIVITY</scope>
    <scope>BIOPHYSICOCHEMICAL PROPERTIES</scope>
    <scope>SUBUNIT</scope>
    <scope>DISRUPTION PHENOTYPE</scope>
    <scope>NO ROLE IN GLUCONEOGENESIS</scope>
    <scope>INDUCTION</scope>
    <source>
        <strain>ATCC BAA-918 / JCM 12380 / KOD1</strain>
    </source>
</reference>
<dbReference type="EC" id="3.1.3.11" evidence="2"/>
<dbReference type="EC" id="3.1.3.25" evidence="2"/>
<dbReference type="EMBL" id="AP006878">
    <property type="protein sequence ID" value="BAD84976.1"/>
    <property type="molecule type" value="Genomic_DNA"/>
</dbReference>
<dbReference type="RefSeq" id="WP_011249738.1">
    <property type="nucleotide sequence ID" value="NC_006624.1"/>
</dbReference>
<dbReference type="SMR" id="Q5JH93"/>
<dbReference type="FunCoup" id="Q5JH93">
    <property type="interactions" value="43"/>
</dbReference>
<dbReference type="STRING" id="69014.TK0787"/>
<dbReference type="EnsemblBacteria" id="BAD84976">
    <property type="protein sequence ID" value="BAD84976"/>
    <property type="gene ID" value="TK0787"/>
</dbReference>
<dbReference type="GeneID" id="78447303"/>
<dbReference type="KEGG" id="tko:TK0787"/>
<dbReference type="PATRIC" id="fig|69014.16.peg.767"/>
<dbReference type="eggNOG" id="arCOG01349">
    <property type="taxonomic scope" value="Archaea"/>
</dbReference>
<dbReference type="HOGENOM" id="CLU_044118_5_0_2"/>
<dbReference type="InParanoid" id="Q5JH93"/>
<dbReference type="OrthoDB" id="58111at2157"/>
<dbReference type="PhylomeDB" id="Q5JH93"/>
<dbReference type="Proteomes" id="UP000000536">
    <property type="component" value="Chromosome"/>
</dbReference>
<dbReference type="GO" id="GO:0042132">
    <property type="term" value="F:fructose 1,6-bisphosphate 1-phosphatase activity"/>
    <property type="evidence" value="ECO:0007669"/>
    <property type="project" value="UniProtKB-EC"/>
</dbReference>
<dbReference type="GO" id="GO:0008934">
    <property type="term" value="F:inositol monophosphate 1-phosphatase activity"/>
    <property type="evidence" value="ECO:0000318"/>
    <property type="project" value="GO_Central"/>
</dbReference>
<dbReference type="GO" id="GO:0046872">
    <property type="term" value="F:metal ion binding"/>
    <property type="evidence" value="ECO:0007669"/>
    <property type="project" value="UniProtKB-KW"/>
</dbReference>
<dbReference type="GO" id="GO:0006020">
    <property type="term" value="P:inositol metabolic process"/>
    <property type="evidence" value="ECO:0000318"/>
    <property type="project" value="GO_Central"/>
</dbReference>
<dbReference type="GO" id="GO:0007165">
    <property type="term" value="P:signal transduction"/>
    <property type="evidence" value="ECO:0000318"/>
    <property type="project" value="GO_Central"/>
</dbReference>
<dbReference type="FunFam" id="3.30.540.10:FF:000027">
    <property type="entry name" value="Fructose-1,6-bisphosphatase/inositol-1-monophosphatase"/>
    <property type="match status" value="1"/>
</dbReference>
<dbReference type="FunFam" id="3.40.190.80:FF:000020">
    <property type="entry name" value="Fructose-1,6-bisphosphatase/inositol-1-monophosphatase"/>
    <property type="match status" value="1"/>
</dbReference>
<dbReference type="Gene3D" id="3.40.190.80">
    <property type="match status" value="1"/>
</dbReference>
<dbReference type="Gene3D" id="3.30.540.10">
    <property type="entry name" value="Fructose-1,6-Bisphosphatase, subunit A, domain 1"/>
    <property type="match status" value="1"/>
</dbReference>
<dbReference type="InterPro" id="IPR020583">
    <property type="entry name" value="Inositol_monoP_metal-BS"/>
</dbReference>
<dbReference type="InterPro" id="IPR000760">
    <property type="entry name" value="Inositol_monophosphatase-like"/>
</dbReference>
<dbReference type="NCBIfam" id="NF009321">
    <property type="entry name" value="PRK12676.1"/>
    <property type="match status" value="1"/>
</dbReference>
<dbReference type="PANTHER" id="PTHR20854">
    <property type="entry name" value="INOSITOL MONOPHOSPHATASE"/>
    <property type="match status" value="1"/>
</dbReference>
<dbReference type="PANTHER" id="PTHR20854:SF4">
    <property type="entry name" value="INOSITOL-1-MONOPHOSPHATASE-RELATED"/>
    <property type="match status" value="1"/>
</dbReference>
<dbReference type="Pfam" id="PF00459">
    <property type="entry name" value="Inositol_P"/>
    <property type="match status" value="1"/>
</dbReference>
<dbReference type="PRINTS" id="PR00377">
    <property type="entry name" value="IMPHPHTASES"/>
</dbReference>
<dbReference type="SUPFAM" id="SSF56655">
    <property type="entry name" value="Carbohydrate phosphatase"/>
    <property type="match status" value="1"/>
</dbReference>
<dbReference type="PROSITE" id="PS00629">
    <property type="entry name" value="IMP_1"/>
    <property type="match status" value="1"/>
</dbReference>
<evidence type="ECO:0000250" key="1">
    <source>
        <dbReference type="UniProtKB" id="Q57573"/>
    </source>
</evidence>
<evidence type="ECO:0000269" key="2">
    <source>
    </source>
</evidence>
<evidence type="ECO:0000303" key="3">
    <source>
    </source>
</evidence>
<evidence type="ECO:0000305" key="4"/>
<evidence type="ECO:0000312" key="5">
    <source>
        <dbReference type="EMBL" id="BAD84976.1"/>
    </source>
</evidence>
<organism>
    <name type="scientific">Thermococcus kodakarensis (strain ATCC BAA-918 / JCM 12380 / KOD1)</name>
    <name type="common">Pyrococcus kodakaraensis (strain KOD1)</name>
    <dbReference type="NCBI Taxonomy" id="69014"/>
    <lineage>
        <taxon>Archaea</taxon>
        <taxon>Methanobacteriati</taxon>
        <taxon>Methanobacteriota</taxon>
        <taxon>Thermococci</taxon>
        <taxon>Thermococcales</taxon>
        <taxon>Thermococcaceae</taxon>
        <taxon>Thermococcus</taxon>
    </lineage>
</organism>
<keyword id="KW-0119">Carbohydrate metabolism</keyword>
<keyword id="KW-0378">Hydrolase</keyword>
<keyword id="KW-0460">Magnesium</keyword>
<keyword id="KW-0479">Metal-binding</keyword>
<keyword id="KW-1185">Reference proteome</keyword>
<proteinExistence type="evidence at protein level"/>
<feature type="chain" id="PRO_0000437186" description="Fructose-1,6-bisphosphatase/inositol-1-monophosphatase">
    <location>
        <begin position="1"/>
        <end position="256"/>
    </location>
</feature>
<feature type="binding site" evidence="1">
    <location>
        <position position="67"/>
    </location>
    <ligand>
        <name>Mg(2+)</name>
        <dbReference type="ChEBI" id="CHEBI:18420"/>
        <label>1</label>
    </ligand>
</feature>
<feature type="binding site" evidence="1">
    <location>
        <position position="83"/>
    </location>
    <ligand>
        <name>Mg(2+)</name>
        <dbReference type="ChEBI" id="CHEBI:18420"/>
        <label>1</label>
    </ligand>
</feature>
<feature type="binding site" evidence="1">
    <location>
        <position position="83"/>
    </location>
    <ligand>
        <name>Mg(2+)</name>
        <dbReference type="ChEBI" id="CHEBI:18420"/>
        <label>2</label>
    </ligand>
</feature>
<feature type="binding site" evidence="1">
    <location>
        <position position="85"/>
    </location>
    <ligand>
        <name>Mg(2+)</name>
        <dbReference type="ChEBI" id="CHEBI:18420"/>
        <label>1</label>
    </ligand>
</feature>
<feature type="binding site" evidence="1">
    <location>
        <begin position="86"/>
        <end position="88"/>
    </location>
    <ligand>
        <name>substrate</name>
    </ligand>
</feature>
<feature type="binding site" evidence="1">
    <location>
        <position position="86"/>
    </location>
    <ligand>
        <name>Mg(2+)</name>
        <dbReference type="ChEBI" id="CHEBI:18420"/>
        <label>2</label>
    </ligand>
</feature>
<feature type="binding site" evidence="1">
    <location>
        <position position="170"/>
    </location>
    <ligand>
        <name>substrate</name>
    </ligand>
</feature>
<feature type="binding site" evidence="1">
    <location>
        <position position="175"/>
    </location>
    <ligand>
        <name>substrate</name>
    </ligand>
</feature>
<feature type="binding site" evidence="1">
    <location>
        <position position="194"/>
    </location>
    <ligand>
        <name>substrate</name>
    </ligand>
</feature>
<feature type="binding site" evidence="1">
    <location>
        <position position="201"/>
    </location>
    <ligand>
        <name>Mg(2+)</name>
        <dbReference type="ChEBI" id="CHEBI:18420"/>
        <label>2</label>
    </ligand>
</feature>
<gene>
    <name type="primary">suhB</name>
    <name evidence="3" type="synonym">imp</name>
    <name evidence="5" type="ordered locus">TK0787</name>
</gene>
<name>BSUHB_THEKO</name>
<comment type="function">
    <text evidence="2">Phosphatase with broad specificity; it can dephosphorylate fructose 1,6-bisphosphate (FBP) and inositol-1-phosphate (IMP). However, while possessing a high FBPase activity in vitro, does not participate in gluconeogenesis in vivo.</text>
</comment>
<comment type="catalytic activity">
    <reaction evidence="2">
        <text>beta-D-fructose 1,6-bisphosphate + H2O = beta-D-fructose 6-phosphate + phosphate</text>
        <dbReference type="Rhea" id="RHEA:11064"/>
        <dbReference type="ChEBI" id="CHEBI:15377"/>
        <dbReference type="ChEBI" id="CHEBI:32966"/>
        <dbReference type="ChEBI" id="CHEBI:43474"/>
        <dbReference type="ChEBI" id="CHEBI:57634"/>
        <dbReference type="EC" id="3.1.3.11"/>
    </reaction>
</comment>
<comment type="catalytic activity">
    <reaction evidence="2">
        <text>a myo-inositol phosphate + H2O = myo-inositol + phosphate</text>
        <dbReference type="Rhea" id="RHEA:24056"/>
        <dbReference type="ChEBI" id="CHEBI:15377"/>
        <dbReference type="ChEBI" id="CHEBI:17268"/>
        <dbReference type="ChEBI" id="CHEBI:43474"/>
        <dbReference type="ChEBI" id="CHEBI:84139"/>
        <dbReference type="EC" id="3.1.3.25"/>
    </reaction>
</comment>
<comment type="cofactor">
    <cofactor evidence="1">
        <name>Mg(2+)</name>
        <dbReference type="ChEBI" id="CHEBI:18420"/>
    </cofactor>
</comment>
<comment type="biophysicochemical properties">
    <kinetics>
        <KM evidence="2">0.02 mM for D-fructose 1,6-bisphosphate (at 85 degrees Celsius)</KM>
        <text evidence="2">kcat is 23.4 sec(-1) for FBPase activity (at 85 degrees Celsius). FBPase activity is 5-fold higher than the IMPase activity.</text>
    </kinetics>
</comment>
<comment type="subunit">
    <text evidence="2">Homodimer.</text>
</comment>
<comment type="induction">
    <text evidence="2">Constitutively expressed, at a very weak level.</text>
</comment>
<comment type="disruption phenotype">
    <text evidence="2">Disruption of this gene does not lead to any detectable phenotypic changes regarding the growth under gluconeogenic conditions (medium supplemented with pyruvate) and glycolytic conditions (medium supplemented with soluble starch).</text>
</comment>
<comment type="miscellaneous">
    <text evidence="2">Is not able to complement the defect of the fbp deletion under gluconeogenic conditions, probably due to insufficient transcription.</text>
</comment>
<comment type="similarity">
    <text evidence="4">Belongs to the inositol monophosphatase superfamily. FBPase class 4 family.</text>
</comment>
<accession>Q5JH93</accession>
<protein>
    <recommendedName>
        <fullName evidence="3">Fructose-1,6-bisphosphatase/inositol-1-monophosphatase</fullName>
        <shortName evidence="3">FBPase/IMPase</shortName>
        <ecNumber evidence="2">3.1.3.11</ecNumber>
        <ecNumber evidence="2">3.1.3.25</ecNumber>
    </recommendedName>
    <alternativeName>
        <fullName>Inositol-1-phosphatase</fullName>
        <shortName>I-1-Pase</shortName>
    </alternativeName>
</protein>